<protein>
    <recommendedName>
        <fullName>Acyl-homoserine lactone acylase QuiP</fullName>
        <shortName>AHL acylase QuiP</shortName>
        <shortName>Acyl-HSL acylase QuiP</shortName>
        <ecNumber>3.5.1.97</ecNumber>
    </recommendedName>
    <component>
        <recommendedName>
            <fullName>Acyl-homoserine lactone acylase QuiP subunit alpha</fullName>
            <shortName>Acyl-HSL acylase QuiP subunit alpha</shortName>
        </recommendedName>
    </component>
    <component>
        <recommendedName>
            <fullName>Acyl-homoserine lactone acylase QuiP subunit beta</fullName>
            <shortName>Acyl-HSL acylase QuiP subunit beta</shortName>
        </recommendedName>
    </component>
</protein>
<name>QUIP_PSEPF</name>
<dbReference type="EC" id="3.5.1.97"/>
<dbReference type="EMBL" id="CP000094">
    <property type="protein sequence ID" value="ABA72956.1"/>
    <property type="molecule type" value="Genomic_DNA"/>
</dbReference>
<dbReference type="RefSeq" id="WP_011332772.1">
    <property type="nucleotide sequence ID" value="NC_007492.2"/>
</dbReference>
<dbReference type="SMR" id="Q3KH00"/>
<dbReference type="MEROPS" id="S45.003"/>
<dbReference type="KEGG" id="pfo:Pfl01_1213"/>
<dbReference type="eggNOG" id="COG2366">
    <property type="taxonomic scope" value="Bacteria"/>
</dbReference>
<dbReference type="HOGENOM" id="CLU_011790_0_1_6"/>
<dbReference type="Proteomes" id="UP000002704">
    <property type="component" value="Chromosome"/>
</dbReference>
<dbReference type="GO" id="GO:0042597">
    <property type="term" value="C:periplasmic space"/>
    <property type="evidence" value="ECO:0007669"/>
    <property type="project" value="UniProtKB-SubCell"/>
</dbReference>
<dbReference type="GO" id="GO:0016811">
    <property type="term" value="F:hydrolase activity, acting on carbon-nitrogen (but not peptide) bonds, in linear amides"/>
    <property type="evidence" value="ECO:0007669"/>
    <property type="project" value="InterPro"/>
</dbReference>
<dbReference type="GO" id="GO:0017000">
    <property type="term" value="P:antibiotic biosynthetic process"/>
    <property type="evidence" value="ECO:0007669"/>
    <property type="project" value="InterPro"/>
</dbReference>
<dbReference type="GO" id="GO:0009372">
    <property type="term" value="P:quorum sensing"/>
    <property type="evidence" value="ECO:0007669"/>
    <property type="project" value="UniProtKB-KW"/>
</dbReference>
<dbReference type="CDD" id="cd03747">
    <property type="entry name" value="Ntn_PGA_like"/>
    <property type="match status" value="1"/>
</dbReference>
<dbReference type="Gene3D" id="1.10.1400.10">
    <property type="match status" value="1"/>
</dbReference>
<dbReference type="Gene3D" id="2.30.120.10">
    <property type="match status" value="1"/>
</dbReference>
<dbReference type="Gene3D" id="3.60.20.10">
    <property type="entry name" value="Glutamine Phosphoribosylpyrophosphate, subunit 1, domain 1"/>
    <property type="match status" value="1"/>
</dbReference>
<dbReference type="Gene3D" id="1.10.439.10">
    <property type="entry name" value="Penicillin Amidohydrolase, domain 1"/>
    <property type="match status" value="1"/>
</dbReference>
<dbReference type="InterPro" id="IPR029055">
    <property type="entry name" value="Ntn_hydrolases_N"/>
</dbReference>
<dbReference type="InterPro" id="IPR014395">
    <property type="entry name" value="Pen/GL7ACA/AHL_acylase"/>
</dbReference>
<dbReference type="InterPro" id="IPR043147">
    <property type="entry name" value="Penicillin_amidase_A-knob"/>
</dbReference>
<dbReference type="InterPro" id="IPR023343">
    <property type="entry name" value="Penicillin_amidase_dom1"/>
</dbReference>
<dbReference type="InterPro" id="IPR043146">
    <property type="entry name" value="Penicillin_amidase_N_B-knob"/>
</dbReference>
<dbReference type="InterPro" id="IPR002692">
    <property type="entry name" value="S45"/>
</dbReference>
<dbReference type="PANTHER" id="PTHR34218:SF4">
    <property type="entry name" value="ACYL-HOMOSERINE LACTONE ACYLASE QUIP"/>
    <property type="match status" value="1"/>
</dbReference>
<dbReference type="PANTHER" id="PTHR34218">
    <property type="entry name" value="PEPTIDASE S45 PENICILLIN AMIDASE"/>
    <property type="match status" value="1"/>
</dbReference>
<dbReference type="Pfam" id="PF01804">
    <property type="entry name" value="Penicil_amidase"/>
    <property type="match status" value="1"/>
</dbReference>
<dbReference type="PIRSF" id="PIRSF001227">
    <property type="entry name" value="Pen_acylase"/>
    <property type="match status" value="1"/>
</dbReference>
<dbReference type="SUPFAM" id="SSF56235">
    <property type="entry name" value="N-terminal nucleophile aminohydrolases (Ntn hydrolases)"/>
    <property type="match status" value="1"/>
</dbReference>
<proteinExistence type="inferred from homology"/>
<gene>
    <name type="primary">quiP</name>
    <name type="ordered locus">Pfl01_1213</name>
</gene>
<organism>
    <name type="scientific">Pseudomonas fluorescens (strain Pf0-1)</name>
    <dbReference type="NCBI Taxonomy" id="205922"/>
    <lineage>
        <taxon>Bacteria</taxon>
        <taxon>Pseudomonadati</taxon>
        <taxon>Pseudomonadota</taxon>
        <taxon>Gammaproteobacteria</taxon>
        <taxon>Pseudomonadales</taxon>
        <taxon>Pseudomonadaceae</taxon>
        <taxon>Pseudomonas</taxon>
    </lineage>
</organism>
<accession>Q3KH00</accession>
<keyword id="KW-0378">Hydrolase</keyword>
<keyword id="KW-0574">Periplasm</keyword>
<keyword id="KW-0673">Quorum sensing</keyword>
<keyword id="KW-0732">Signal</keyword>
<keyword id="KW-0865">Zymogen</keyword>
<evidence type="ECO:0000250" key="1"/>
<evidence type="ECO:0000255" key="2"/>
<evidence type="ECO:0000305" key="3"/>
<feature type="signal peptide" evidence="2">
    <location>
        <begin position="1"/>
        <end position="33"/>
    </location>
</feature>
<feature type="chain" id="PRO_0000253389" description="Acyl-homoserine lactone acylase QuiP">
    <location>
        <begin position="34"/>
        <end position="816"/>
    </location>
</feature>
<feature type="chain" id="PRO_0000253390" description="Acyl-homoserine lactone acylase QuiP subunit alpha">
    <location>
        <begin position="34"/>
        <end status="unknown"/>
    </location>
</feature>
<feature type="propeptide" id="PRO_0000253391" description="Spacer peptide" evidence="1">
    <location>
        <begin status="unknown"/>
        <end position="261"/>
    </location>
</feature>
<feature type="chain" id="PRO_0000253392" description="Acyl-homoserine lactone acylase QuiP subunit beta">
    <location>
        <begin position="262"/>
        <end position="816"/>
    </location>
</feature>
<feature type="active site" description="Nucleophile" evidence="1">
    <location>
        <position position="262"/>
    </location>
</feature>
<reference key="1">
    <citation type="journal article" date="2009" name="Genome Biol.">
        <title>Genomic and genetic analyses of diversity and plant interactions of Pseudomonas fluorescens.</title>
        <authorList>
            <person name="Silby M.W."/>
            <person name="Cerdeno-Tarraga A.M."/>
            <person name="Vernikos G.S."/>
            <person name="Giddens S.R."/>
            <person name="Jackson R.W."/>
            <person name="Preston G.M."/>
            <person name="Zhang X.-X."/>
            <person name="Moon C.D."/>
            <person name="Gehrig S.M."/>
            <person name="Godfrey S.A.C."/>
            <person name="Knight C.G."/>
            <person name="Malone J.G."/>
            <person name="Robinson Z."/>
            <person name="Spiers A.J."/>
            <person name="Harris S."/>
            <person name="Challis G.L."/>
            <person name="Yaxley A.M."/>
            <person name="Harris D."/>
            <person name="Seeger K."/>
            <person name="Murphy L."/>
            <person name="Rutter S."/>
            <person name="Squares R."/>
            <person name="Quail M.A."/>
            <person name="Saunders E."/>
            <person name="Mavromatis K."/>
            <person name="Brettin T.S."/>
            <person name="Bentley S.D."/>
            <person name="Hothersall J."/>
            <person name="Stephens E."/>
            <person name="Thomas C.M."/>
            <person name="Parkhill J."/>
            <person name="Levy S.B."/>
            <person name="Rainey P.B."/>
            <person name="Thomson N.R."/>
        </authorList>
    </citation>
    <scope>NUCLEOTIDE SEQUENCE [LARGE SCALE GENOMIC DNA]</scope>
    <source>
        <strain>Pf0-1</strain>
    </source>
</reference>
<comment type="function">
    <text evidence="1">Catalyzes the deacylation of acyl-homoserine lactone (AHL or acyl-HSL), releasing homoserine lactone (HSL) and the corresponding fatty acid. Possesses a specificity for the degradation of long-chain acyl-HSLs (side chains of seven or more carbons in length) (By similarity).</text>
</comment>
<comment type="catalytic activity">
    <reaction>
        <text>an N-acyl-L-homoserine lactone + H2O = L-homoserine lactone + a carboxylate</text>
        <dbReference type="Rhea" id="RHEA:18937"/>
        <dbReference type="ChEBI" id="CHEBI:15377"/>
        <dbReference type="ChEBI" id="CHEBI:29067"/>
        <dbReference type="ChEBI" id="CHEBI:55474"/>
        <dbReference type="ChEBI" id="CHEBI:58633"/>
        <dbReference type="EC" id="3.5.1.97"/>
    </reaction>
</comment>
<comment type="subunit">
    <text evidence="1">Heterodimer of an alpha subunit and a beta subunit processed from the same precursor.</text>
</comment>
<comment type="subcellular location">
    <subcellularLocation>
        <location evidence="3">Periplasm</location>
    </subcellularLocation>
</comment>
<comment type="miscellaneous">
    <text>AHL-mediated signaling mediates quorum sensing in many species of Proteobacteria, regulating hundreds of genes, including many that code for extracellular virulence factors.</text>
</comment>
<comment type="similarity">
    <text evidence="3">Belongs to the peptidase S45 family.</text>
</comment>
<sequence length="816" mass="89025">MASPALSHFLPRFGVAAAVAGVLSLTGCQTWNAQDTLPPTSGVQPLKGLAQNVSVRRNAMGMPLIESNSFHDALFALGYVHASDRINQMVTLRLLAQGRLAEMSGSSMLDADRYMRAVNLKKSAGELYKASSPRLKRFFEVYARGVNAYLFRYADKLPGDLASSGYKPEYWKPEDSALIFCLLNFSQSANLPEEIASLVLAQTVTNDKLAWLTPSAPDENLPLAEADKLQGIKLNGQIPGLTELSNASEQLAALNLLGTQSSNNWAIAPQRSRSGKSLLASDSHGPLAAPSLWSFVQIRAPKYQAAGVTVAGLPMVLGGFNGKVAWSLTSVLGDNQDLFLEKIRRQGSSLTYEVNGKWQPVAVRNETYFVKGQRPIREAVYETRHGALLNSTQAAAQGTGFGLALQTPSFTDDKSLDAFFDLSRAQNVERASDATREIRAIALNLVFADASNIGWQVTGRFPNRREGEGLLPSPGWEGRYDWDGYADPMLHPYDQDPAQGWLGTANQRVIPHGYGMQLSNSWAAPERGERLAELAGSGKHDSRSVIAMQYDQTTTFAAKLKKMFEAPGMAQPLKQAIDALPEAERSKAREAYTRLMAFDGKLSPTSADAAIYELFLQESMKQIFLDELGPQNSPAWKAFIANGDLSYAAQADHLLGREDSPFWDDARTPQKEDKPAILARSLAAAISAGDSQLGGDRRAWQWGKLHRYEWKNANGQSVRGPIAAGGDHTTLNTAAFAWGQDFNTTRAPSMRFIVDFGQSEPLMGQNGTGQSGNPVSPNYLNGIDPWLKGQYIGLPMQPQNFDRVYGKTRLTLTPGK</sequence>